<organism>
    <name type="scientific">Escherichia coli O157:H7 (strain EC4115 / EHEC)</name>
    <dbReference type="NCBI Taxonomy" id="444450"/>
    <lineage>
        <taxon>Bacteria</taxon>
        <taxon>Pseudomonadati</taxon>
        <taxon>Pseudomonadota</taxon>
        <taxon>Gammaproteobacteria</taxon>
        <taxon>Enterobacterales</taxon>
        <taxon>Enterobacteriaceae</taxon>
        <taxon>Escherichia</taxon>
    </lineage>
</organism>
<protein>
    <recommendedName>
        <fullName evidence="1">2-succinyl-5-enolpyruvyl-6-hydroxy-3-cyclohexene-1-carboxylate synthase</fullName>
        <shortName evidence="1">SEPHCHC synthase</shortName>
        <ecNumber evidence="1">2.2.1.9</ecNumber>
    </recommendedName>
    <alternativeName>
        <fullName evidence="1">Menaquinone biosynthesis protein MenD</fullName>
    </alternativeName>
</protein>
<name>MEND_ECO5E</name>
<keyword id="KW-0460">Magnesium</keyword>
<keyword id="KW-0464">Manganese</keyword>
<keyword id="KW-0474">Menaquinone biosynthesis</keyword>
<keyword id="KW-0479">Metal-binding</keyword>
<keyword id="KW-0786">Thiamine pyrophosphate</keyword>
<keyword id="KW-0808">Transferase</keyword>
<dbReference type="EC" id="2.2.1.9" evidence="1"/>
<dbReference type="EMBL" id="CP001164">
    <property type="protein sequence ID" value="ACI38743.1"/>
    <property type="molecule type" value="Genomic_DNA"/>
</dbReference>
<dbReference type="RefSeq" id="WP_001301869.1">
    <property type="nucleotide sequence ID" value="NC_011353.1"/>
</dbReference>
<dbReference type="SMR" id="B5YXQ8"/>
<dbReference type="KEGG" id="ecf:ECH74115_3406"/>
<dbReference type="HOGENOM" id="CLU_006051_3_0_6"/>
<dbReference type="UniPathway" id="UPA00079"/>
<dbReference type="UniPathway" id="UPA01057">
    <property type="reaction ID" value="UER00164"/>
</dbReference>
<dbReference type="GO" id="GO:0070204">
    <property type="term" value="F:2-succinyl-5-enolpyruvyl-6-hydroxy-3-cyclohexene-1-carboxylic-acid synthase activity"/>
    <property type="evidence" value="ECO:0007669"/>
    <property type="project" value="UniProtKB-UniRule"/>
</dbReference>
<dbReference type="GO" id="GO:0000287">
    <property type="term" value="F:magnesium ion binding"/>
    <property type="evidence" value="ECO:0007669"/>
    <property type="project" value="UniProtKB-UniRule"/>
</dbReference>
<dbReference type="GO" id="GO:0030145">
    <property type="term" value="F:manganese ion binding"/>
    <property type="evidence" value="ECO:0007669"/>
    <property type="project" value="UniProtKB-UniRule"/>
</dbReference>
<dbReference type="GO" id="GO:0030976">
    <property type="term" value="F:thiamine pyrophosphate binding"/>
    <property type="evidence" value="ECO:0007669"/>
    <property type="project" value="UniProtKB-UniRule"/>
</dbReference>
<dbReference type="GO" id="GO:0009234">
    <property type="term" value="P:menaquinone biosynthetic process"/>
    <property type="evidence" value="ECO:0007669"/>
    <property type="project" value="UniProtKB-UniRule"/>
</dbReference>
<dbReference type="CDD" id="cd07037">
    <property type="entry name" value="TPP_PYR_MenD"/>
    <property type="match status" value="1"/>
</dbReference>
<dbReference type="CDD" id="cd02009">
    <property type="entry name" value="TPP_SHCHC_synthase"/>
    <property type="match status" value="1"/>
</dbReference>
<dbReference type="FunFam" id="3.40.50.1220:FF:000010">
    <property type="entry name" value="2-succinyl-5-enolpyruvyl-6-hydroxy-3-cyclohexene-1-carboxylate synthase"/>
    <property type="match status" value="1"/>
</dbReference>
<dbReference type="FunFam" id="3.40.50.970:FF:000029">
    <property type="entry name" value="2-succinyl-5-enolpyruvyl-6-hydroxy-3-cyclohexene-1-carboxylate synthase"/>
    <property type="match status" value="1"/>
</dbReference>
<dbReference type="Gene3D" id="3.40.50.970">
    <property type="match status" value="2"/>
</dbReference>
<dbReference type="Gene3D" id="3.40.50.1220">
    <property type="entry name" value="TPP-binding domain"/>
    <property type="match status" value="1"/>
</dbReference>
<dbReference type="HAMAP" id="MF_01659">
    <property type="entry name" value="MenD"/>
    <property type="match status" value="1"/>
</dbReference>
<dbReference type="InterPro" id="IPR004433">
    <property type="entry name" value="MenaQ_synth_MenD"/>
</dbReference>
<dbReference type="InterPro" id="IPR032264">
    <property type="entry name" value="MenD_middle"/>
</dbReference>
<dbReference type="InterPro" id="IPR029061">
    <property type="entry name" value="THDP-binding"/>
</dbReference>
<dbReference type="InterPro" id="IPR012001">
    <property type="entry name" value="Thiamin_PyroP_enz_TPP-bd_dom"/>
</dbReference>
<dbReference type="InterPro" id="IPR011766">
    <property type="entry name" value="TPP_enzyme_TPP-bd"/>
</dbReference>
<dbReference type="NCBIfam" id="TIGR00173">
    <property type="entry name" value="menD"/>
    <property type="match status" value="1"/>
</dbReference>
<dbReference type="PANTHER" id="PTHR42916">
    <property type="entry name" value="2-SUCCINYL-5-ENOLPYRUVYL-6-HYDROXY-3-CYCLOHEXENE-1-CARBOXYLATE SYNTHASE"/>
    <property type="match status" value="1"/>
</dbReference>
<dbReference type="PANTHER" id="PTHR42916:SF1">
    <property type="entry name" value="PROTEIN PHYLLO, CHLOROPLASTIC"/>
    <property type="match status" value="1"/>
</dbReference>
<dbReference type="Pfam" id="PF02775">
    <property type="entry name" value="TPP_enzyme_C"/>
    <property type="match status" value="1"/>
</dbReference>
<dbReference type="Pfam" id="PF16582">
    <property type="entry name" value="TPP_enzyme_M_2"/>
    <property type="match status" value="1"/>
</dbReference>
<dbReference type="Pfam" id="PF02776">
    <property type="entry name" value="TPP_enzyme_N"/>
    <property type="match status" value="1"/>
</dbReference>
<dbReference type="PIRSF" id="PIRSF004983">
    <property type="entry name" value="MenD"/>
    <property type="match status" value="1"/>
</dbReference>
<dbReference type="SUPFAM" id="SSF52518">
    <property type="entry name" value="Thiamin diphosphate-binding fold (THDP-binding)"/>
    <property type="match status" value="2"/>
</dbReference>
<reference key="1">
    <citation type="journal article" date="2011" name="Proc. Natl. Acad. Sci. U.S.A.">
        <title>Genomic anatomy of Escherichia coli O157:H7 outbreaks.</title>
        <authorList>
            <person name="Eppinger M."/>
            <person name="Mammel M.K."/>
            <person name="Leclerc J.E."/>
            <person name="Ravel J."/>
            <person name="Cebula T.A."/>
        </authorList>
    </citation>
    <scope>NUCLEOTIDE SEQUENCE [LARGE SCALE GENOMIC DNA]</scope>
    <source>
        <strain>EC4115 / EHEC</strain>
    </source>
</reference>
<proteinExistence type="inferred from homology"/>
<sequence>MSVSAFNRRWAAVILEALTRHGVRHICIAPGSRSTPLTLAAAENSAFIHHTHFDERGLGHLALGLAKVSKQPVAVIVTSGTAVANLYPALIEAGLTGEKLILLTADRPPELIDCGANQAIRQPGMFASHPTHSISLPRPTQDIPARWLVSTIDHALGTLHAGGVHINCPFAEPLYGEMDDTGLSWQQRLGDWWQDDKPWLREAPRLESEKQRDWFFWRQKRGVVVAGRMSAEEGKKVALWAQTLGWPLIGDVLSQTGQPLPCADLWLGNAKATSELQQAQIVVQLGSSLTGKRLLQWQASCEPEEYWIVDDIEGRLDPAHHRGRRLIANIADWLELHPAEKRQPWCVEIPRLAEQAMQAVIACRDAFGEAQLAHRISDYLPEQGQLFVGNSLVVRLIDALSQLPAGYPVYSNRGASGIDGLLSTAAGVQRASGKPTLAIVGDLSALYDLNALALLRQVSAPLVLIVVNNNGGQIFSLLPTPKSERERFYLMPQNVHFEHAAAMFELKYHRPQNWQELETVLADAWRTPTTTVIEMVVNDTDGAQTLQQLLAQVSHL</sequence>
<feature type="chain" id="PRO_1000187070" description="2-succinyl-5-enolpyruvyl-6-hydroxy-3-cyclohexene-1-carboxylate synthase">
    <location>
        <begin position="1"/>
        <end position="556"/>
    </location>
</feature>
<gene>
    <name evidence="1" type="primary">menD</name>
    <name type="ordered locus">ECH74115_3406</name>
</gene>
<accession>B5YXQ8</accession>
<evidence type="ECO:0000255" key="1">
    <source>
        <dbReference type="HAMAP-Rule" id="MF_01659"/>
    </source>
</evidence>
<comment type="function">
    <text evidence="1">Catalyzes the thiamine diphosphate-dependent decarboxylation of 2-oxoglutarate and the subsequent addition of the resulting succinic semialdehyde-thiamine pyrophosphate anion to isochorismate to yield 2-succinyl-5-enolpyruvyl-6-hydroxy-3-cyclohexene-1-carboxylate (SEPHCHC).</text>
</comment>
<comment type="catalytic activity">
    <reaction evidence="1">
        <text>isochorismate + 2-oxoglutarate + H(+) = 5-enolpyruvoyl-6-hydroxy-2-succinyl-cyclohex-3-ene-1-carboxylate + CO2</text>
        <dbReference type="Rhea" id="RHEA:25593"/>
        <dbReference type="ChEBI" id="CHEBI:15378"/>
        <dbReference type="ChEBI" id="CHEBI:16526"/>
        <dbReference type="ChEBI" id="CHEBI:16810"/>
        <dbReference type="ChEBI" id="CHEBI:29780"/>
        <dbReference type="ChEBI" id="CHEBI:58818"/>
        <dbReference type="EC" id="2.2.1.9"/>
    </reaction>
</comment>
<comment type="cofactor">
    <cofactor evidence="1">
        <name>Mg(2+)</name>
        <dbReference type="ChEBI" id="CHEBI:18420"/>
    </cofactor>
    <cofactor evidence="1">
        <name>Mn(2+)</name>
        <dbReference type="ChEBI" id="CHEBI:29035"/>
    </cofactor>
</comment>
<comment type="cofactor">
    <cofactor evidence="1">
        <name>thiamine diphosphate</name>
        <dbReference type="ChEBI" id="CHEBI:58937"/>
    </cofactor>
    <text evidence="1">Binds 1 thiamine pyrophosphate per subunit.</text>
</comment>
<comment type="pathway">
    <text evidence="1">Quinol/quinone metabolism; 1,4-dihydroxy-2-naphthoate biosynthesis; 1,4-dihydroxy-2-naphthoate from chorismate: step 2/7.</text>
</comment>
<comment type="pathway">
    <text evidence="1">Quinol/quinone metabolism; menaquinone biosynthesis.</text>
</comment>
<comment type="subunit">
    <text evidence="1">Homodimer.</text>
</comment>
<comment type="similarity">
    <text evidence="1">Belongs to the TPP enzyme family. MenD subfamily.</text>
</comment>